<feature type="chain" id="PRO_0000215016" description="Putative membrane protein IgaA homolog">
    <location>
        <begin position="1"/>
        <end position="710"/>
    </location>
</feature>
<feature type="topological domain" description="Periplasmic" evidence="2">
    <location>
        <position position="1"/>
    </location>
</feature>
<feature type="transmembrane region" description="Helical" evidence="2">
    <location>
        <begin position="2"/>
        <end position="22"/>
    </location>
</feature>
<feature type="topological domain" description="Cytoplasmic" evidence="2">
    <location>
        <begin position="23"/>
        <end position="204"/>
    </location>
</feature>
<feature type="transmembrane region" description="Helical" evidence="2">
    <location>
        <begin position="205"/>
        <end position="225"/>
    </location>
</feature>
<feature type="transmembrane region" description="Helical" evidence="2">
    <location>
        <begin position="226"/>
        <end position="246"/>
    </location>
</feature>
<feature type="topological domain" description="Cytoplasmic" evidence="2">
    <location>
        <begin position="247"/>
        <end position="339"/>
    </location>
</feature>
<feature type="transmembrane region" description="Helical" evidence="2">
    <location>
        <begin position="340"/>
        <end position="360"/>
    </location>
</feature>
<feature type="topological domain" description="Periplasmic" evidence="2">
    <location>
        <begin position="361"/>
        <end position="656"/>
    </location>
</feature>
<feature type="transmembrane region" description="Helical" evidence="2">
    <location>
        <begin position="657"/>
        <end position="677"/>
    </location>
</feature>
<feature type="topological domain" description="Cytoplasmic" evidence="2">
    <location>
        <begin position="678"/>
        <end position="710"/>
    </location>
</feature>
<evidence type="ECO:0000250" key="1"/>
<evidence type="ECO:0000255" key="2"/>
<evidence type="ECO:0000305" key="3"/>
<gene>
    <name type="primary">yrfF</name>
    <name type="ordered locus">STY4301</name>
    <name type="ordered locus">t4011</name>
</gene>
<comment type="subcellular location">
    <subcellularLocation>
        <location evidence="1">Cell inner membrane</location>
        <topology evidence="1">Multi-pass membrane protein</topology>
    </subcellularLocation>
</comment>
<comment type="similarity">
    <text evidence="3">Belongs to the IgaA family.</text>
</comment>
<proteinExistence type="inferred from homology"/>
<reference key="1">
    <citation type="journal article" date="2001" name="Nature">
        <title>Complete genome sequence of a multiple drug resistant Salmonella enterica serovar Typhi CT18.</title>
        <authorList>
            <person name="Parkhill J."/>
            <person name="Dougan G."/>
            <person name="James K.D."/>
            <person name="Thomson N.R."/>
            <person name="Pickard D."/>
            <person name="Wain J."/>
            <person name="Churcher C.M."/>
            <person name="Mungall K.L."/>
            <person name="Bentley S.D."/>
            <person name="Holden M.T.G."/>
            <person name="Sebaihia M."/>
            <person name="Baker S."/>
            <person name="Basham D."/>
            <person name="Brooks K."/>
            <person name="Chillingworth T."/>
            <person name="Connerton P."/>
            <person name="Cronin A."/>
            <person name="Davis P."/>
            <person name="Davies R.M."/>
            <person name="Dowd L."/>
            <person name="White N."/>
            <person name="Farrar J."/>
            <person name="Feltwell T."/>
            <person name="Hamlin N."/>
            <person name="Haque A."/>
            <person name="Hien T.T."/>
            <person name="Holroyd S."/>
            <person name="Jagels K."/>
            <person name="Krogh A."/>
            <person name="Larsen T.S."/>
            <person name="Leather S."/>
            <person name="Moule S."/>
            <person name="O'Gaora P."/>
            <person name="Parry C."/>
            <person name="Quail M.A."/>
            <person name="Rutherford K.M."/>
            <person name="Simmonds M."/>
            <person name="Skelton J."/>
            <person name="Stevens K."/>
            <person name="Whitehead S."/>
            <person name="Barrell B.G."/>
        </authorList>
    </citation>
    <scope>NUCLEOTIDE SEQUENCE [LARGE SCALE GENOMIC DNA]</scope>
    <source>
        <strain>CT18</strain>
    </source>
</reference>
<reference key="2">
    <citation type="journal article" date="2003" name="J. Bacteriol.">
        <title>Comparative genomics of Salmonella enterica serovar Typhi strains Ty2 and CT18.</title>
        <authorList>
            <person name="Deng W."/>
            <person name="Liou S.-R."/>
            <person name="Plunkett G. III"/>
            <person name="Mayhew G.F."/>
            <person name="Rose D.J."/>
            <person name="Burland V."/>
            <person name="Kodoyianni V."/>
            <person name="Schwartz D.C."/>
            <person name="Blattner F.R."/>
        </authorList>
    </citation>
    <scope>NUCLEOTIDE SEQUENCE [LARGE SCALE GENOMIC DNA]</scope>
    <source>
        <strain>ATCC 700931 / Ty2</strain>
    </source>
</reference>
<keyword id="KW-0997">Cell inner membrane</keyword>
<keyword id="KW-1003">Cell membrane</keyword>
<keyword id="KW-0472">Membrane</keyword>
<keyword id="KW-0812">Transmembrane</keyword>
<keyword id="KW-1133">Transmembrane helix</keyword>
<name>IGAA_SALTI</name>
<dbReference type="EMBL" id="AL513382">
    <property type="protein sequence ID" value="CAD08119.1"/>
    <property type="molecule type" value="Genomic_DNA"/>
</dbReference>
<dbReference type="EMBL" id="AE014613">
    <property type="protein sequence ID" value="AAO71481.1"/>
    <property type="molecule type" value="Genomic_DNA"/>
</dbReference>
<dbReference type="RefSeq" id="NP_458409.1">
    <property type="nucleotide sequence ID" value="NC_003198.1"/>
</dbReference>
<dbReference type="SMR" id="P58721"/>
<dbReference type="STRING" id="220341.gene:17588132"/>
<dbReference type="KEGG" id="stt:t4011"/>
<dbReference type="KEGG" id="sty:STY4301"/>
<dbReference type="PATRIC" id="fig|220341.7.peg.4396"/>
<dbReference type="eggNOG" id="ENOG502Z8KK">
    <property type="taxonomic scope" value="Bacteria"/>
</dbReference>
<dbReference type="HOGENOM" id="CLU_014723_0_0_6"/>
<dbReference type="OMA" id="LIYPPHW"/>
<dbReference type="Proteomes" id="UP000000541">
    <property type="component" value="Chromosome"/>
</dbReference>
<dbReference type="Proteomes" id="UP000002670">
    <property type="component" value="Chromosome"/>
</dbReference>
<dbReference type="GO" id="GO:0005886">
    <property type="term" value="C:plasma membrane"/>
    <property type="evidence" value="ECO:0007669"/>
    <property type="project" value="UniProtKB-SubCell"/>
</dbReference>
<dbReference type="InterPro" id="IPR010771">
    <property type="entry name" value="IgaA"/>
</dbReference>
<dbReference type="Pfam" id="PF07095">
    <property type="entry name" value="IgaA"/>
    <property type="match status" value="1"/>
</dbReference>
<organism>
    <name type="scientific">Salmonella typhi</name>
    <dbReference type="NCBI Taxonomy" id="90370"/>
    <lineage>
        <taxon>Bacteria</taxon>
        <taxon>Pseudomonadati</taxon>
        <taxon>Pseudomonadota</taxon>
        <taxon>Gammaproteobacteria</taxon>
        <taxon>Enterobacterales</taxon>
        <taxon>Enterobacteriaceae</taxon>
        <taxon>Salmonella</taxon>
    </lineage>
</organism>
<sequence length="710" mass="79366">MSTILIFIAALLACSLLAIWRFRVKSRRGSLPWFSAFQDAQTRKLLPEERSAVENYLDNLSQIQQVPGPTGASAAPISLTLNAESNSVVILTHSITRYGITTDDPNKWRYYLDSVEVHLPPFWEQYINDENNVELILTDTLPLVISLNGHTLQEYMQESRGYALQNTASTQASIRGEESEQIELLNIRQETHEEYALSRPAGLREALLIVASFLLFFFCLITPDVFVPWMIGGAILLLAAGLWGLFAPPSKSALREIHCLRGTPRRWGLFGENNQEQINNISLGIIDLIYPAHWQPYITQDLGQQTDIDIYLDRHVARQGRFLSLHDEVKNFPLQHWLRSTVIAIGSLLVLFMLLFWIPLDMPIKFTLSWMKGAQTIEATTVKQLEKAGVRVGDTLHLSGKGMCNIHSGATWSGQSNSPFMPFDCSQIIWNDAPALPLPESDLVNKAMALSQAVNRQLHPKPEDDSRVSASLRSAIQKSGMVLLDDFGDIVLKTADLCAAEDECVRLKNALVNLGNSKDWNALVKRANAGKLDGVNVLLRPVSAESLENLVTTSTAPFISRETARAAQSLNSPAPGGFLIASDEGSELVDQAWPSTPLYDYPAQEQWSAFQRLAQTLMQTPFSAEGIVTSVYTDANGTQHISLHRIPDKSGWWRYLGTTLLMLAMIVSAVYNGIQAFRRYQRHRTRMADIQEYYESCLNPRLTVSPENLI</sequence>
<protein>
    <recommendedName>
        <fullName>Putative membrane protein IgaA homolog</fullName>
    </recommendedName>
</protein>
<accession>P58721</accession>